<evidence type="ECO:0000255" key="1">
    <source>
        <dbReference type="PROSITE-ProRule" id="PRU00190"/>
    </source>
</evidence>
<evidence type="ECO:0000269" key="2">
    <source>
    </source>
</evidence>
<feature type="chain" id="PRO_0000269653" description="Potential protein lysine methyltransferase SET6">
    <location>
        <begin position="1"/>
        <end position="373"/>
    </location>
</feature>
<feature type="domain" description="SET" evidence="1">
    <location>
        <begin position="12"/>
        <end position="338"/>
    </location>
</feature>
<proteinExistence type="inferred from homology"/>
<gene>
    <name type="primary">SET6</name>
    <name type="ordered locus">YPL165C</name>
    <name type="ORF">P2545</name>
</gene>
<dbReference type="EC" id="2.1.1.-"/>
<dbReference type="EMBL" id="X96770">
    <property type="protein sequence ID" value="CAA65556.1"/>
    <property type="molecule type" value="Genomic_DNA"/>
</dbReference>
<dbReference type="EMBL" id="Z73522">
    <property type="protein sequence ID" value="CAA97872.1"/>
    <property type="molecule type" value="Genomic_DNA"/>
</dbReference>
<dbReference type="EMBL" id="BK006949">
    <property type="protein sequence ID" value="DAA11269.1"/>
    <property type="molecule type" value="Genomic_DNA"/>
</dbReference>
<dbReference type="PIR" id="S65176">
    <property type="entry name" value="S65176"/>
</dbReference>
<dbReference type="RefSeq" id="NP_015160.1">
    <property type="nucleotide sequence ID" value="NM_001183979.1"/>
</dbReference>
<dbReference type="BioGRID" id="36018">
    <property type="interactions" value="55"/>
</dbReference>
<dbReference type="FunCoup" id="Q12529">
    <property type="interactions" value="93"/>
</dbReference>
<dbReference type="IntAct" id="Q12529">
    <property type="interactions" value="55"/>
</dbReference>
<dbReference type="STRING" id="4932.YPL165C"/>
<dbReference type="PaxDb" id="4932-YPL165C"/>
<dbReference type="EnsemblFungi" id="YPL165C_mRNA">
    <property type="protein sequence ID" value="YPL165C"/>
    <property type="gene ID" value="YPL165C"/>
</dbReference>
<dbReference type="GeneID" id="855938"/>
<dbReference type="KEGG" id="sce:YPL165C"/>
<dbReference type="AGR" id="SGD:S000006086"/>
<dbReference type="SGD" id="S000006086">
    <property type="gene designation" value="SET6"/>
</dbReference>
<dbReference type="VEuPathDB" id="FungiDB:YPL165C"/>
<dbReference type="eggNOG" id="KOG2084">
    <property type="taxonomic scope" value="Eukaryota"/>
</dbReference>
<dbReference type="GeneTree" id="ENSGT00940000167335"/>
<dbReference type="HOGENOM" id="CLU_038964_1_0_1"/>
<dbReference type="InParanoid" id="Q12529"/>
<dbReference type="OMA" id="FRKEVCH"/>
<dbReference type="OrthoDB" id="1028014at2759"/>
<dbReference type="BioCyc" id="YEAST:G3O-34061-MONOMER"/>
<dbReference type="Reactome" id="R-SCE-3214841">
    <property type="pathway name" value="PKMTs methylate histone lysines"/>
</dbReference>
<dbReference type="BioGRID-ORCS" id="855938">
    <property type="hits" value="2 hits in 10 CRISPR screens"/>
</dbReference>
<dbReference type="PRO" id="PR:Q12529"/>
<dbReference type="Proteomes" id="UP000002311">
    <property type="component" value="Chromosome XVI"/>
</dbReference>
<dbReference type="RNAct" id="Q12529">
    <property type="molecule type" value="protein"/>
</dbReference>
<dbReference type="GO" id="GO:0005634">
    <property type="term" value="C:nucleus"/>
    <property type="evidence" value="ECO:0000318"/>
    <property type="project" value="GO_Central"/>
</dbReference>
<dbReference type="GO" id="GO:0008168">
    <property type="term" value="F:methyltransferase activity"/>
    <property type="evidence" value="ECO:0007669"/>
    <property type="project" value="UniProtKB-KW"/>
</dbReference>
<dbReference type="GO" id="GO:0032259">
    <property type="term" value="P:methylation"/>
    <property type="evidence" value="ECO:0007669"/>
    <property type="project" value="UniProtKB-KW"/>
</dbReference>
<dbReference type="CDD" id="cd20071">
    <property type="entry name" value="SET_SMYD"/>
    <property type="match status" value="1"/>
</dbReference>
<dbReference type="Gene3D" id="2.170.270.10">
    <property type="entry name" value="SET domain"/>
    <property type="match status" value="1"/>
</dbReference>
<dbReference type="InterPro" id="IPR050869">
    <property type="entry name" value="H3K4_H4K5_MeTrfase"/>
</dbReference>
<dbReference type="InterPro" id="IPR001214">
    <property type="entry name" value="SET_dom"/>
</dbReference>
<dbReference type="InterPro" id="IPR046341">
    <property type="entry name" value="SET_dom_sf"/>
</dbReference>
<dbReference type="PANTHER" id="PTHR12197">
    <property type="entry name" value="HISTONE-LYSINE N-METHYLTRANSFERASE SMYD"/>
    <property type="match status" value="1"/>
</dbReference>
<dbReference type="PANTHER" id="PTHR12197:SF294">
    <property type="entry name" value="POTENTIAL PROTEIN LYSINE METHYLTRANSFERASE SET6"/>
    <property type="match status" value="1"/>
</dbReference>
<dbReference type="Pfam" id="PF00856">
    <property type="entry name" value="SET"/>
    <property type="match status" value="1"/>
</dbReference>
<dbReference type="SMART" id="SM00317">
    <property type="entry name" value="SET"/>
    <property type="match status" value="1"/>
</dbReference>
<dbReference type="SUPFAM" id="SSF82199">
    <property type="entry name" value="SET domain"/>
    <property type="match status" value="2"/>
</dbReference>
<dbReference type="PROSITE" id="PS50280">
    <property type="entry name" value="SET"/>
    <property type="match status" value="1"/>
</dbReference>
<sequence length="373" mass="43750">MTIDGDVHEISPFFQVRQTKWGGRACFSNGNIPKGTTVLQVSNFTGTSISYEFRKEVCHNCFAYANAKTMKYKLNYDYLRDLVCNAHYQINPKKFLGAGLWFCSEHCRTSYLQIPNIIELIECYEILLHHFPSMLKRYNYTSEQEEKLNSILISENVIQSSWDEIESKWIPRINNMKSAKRINQLPPTCEDEYCCIRFVCESLFNLKYMDPQCITYRAFNMLQSNELSKISKFPVLLHFQKLVFQTLYILLPSHLHRMLSIPLLRHILGTEYGNAFGLWQEGEASDSREYFGYWVFPEASYFNHSCNPNITKYRKGNSMLFTMNRDIKKDEQICIDYSGVLDLPTVKRRAFLADSWFFDCACERCKSELQSVH</sequence>
<reference key="1">
    <citation type="journal article" date="1996" name="Yeast">
        <title>The sequence of 55 kb on the left arm of yeast chromosome XVI identifies a small nuclear RNA, a new putative protein kinase and two new putative regulators.</title>
        <authorList>
            <person name="Purnelle B."/>
            <person name="Coster F."/>
            <person name="Goffeau A."/>
        </authorList>
    </citation>
    <scope>NUCLEOTIDE SEQUENCE [GENOMIC DNA]</scope>
    <source>
        <strain>ATCC 204511 / S288c / AB972</strain>
    </source>
</reference>
<reference key="2">
    <citation type="journal article" date="1997" name="Nature">
        <title>The nucleotide sequence of Saccharomyces cerevisiae chromosome XVI.</title>
        <authorList>
            <person name="Bussey H."/>
            <person name="Storms R.K."/>
            <person name="Ahmed A."/>
            <person name="Albermann K."/>
            <person name="Allen E."/>
            <person name="Ansorge W."/>
            <person name="Araujo R."/>
            <person name="Aparicio A."/>
            <person name="Barrell B.G."/>
            <person name="Badcock K."/>
            <person name="Benes V."/>
            <person name="Botstein D."/>
            <person name="Bowman S."/>
            <person name="Brueckner M."/>
            <person name="Carpenter J."/>
            <person name="Cherry J.M."/>
            <person name="Chung E."/>
            <person name="Churcher C.M."/>
            <person name="Coster F."/>
            <person name="Davis K."/>
            <person name="Davis R.W."/>
            <person name="Dietrich F.S."/>
            <person name="Delius H."/>
            <person name="DiPaolo T."/>
            <person name="Dubois E."/>
            <person name="Duesterhoeft A."/>
            <person name="Duncan M."/>
            <person name="Floeth M."/>
            <person name="Fortin N."/>
            <person name="Friesen J.D."/>
            <person name="Fritz C."/>
            <person name="Goffeau A."/>
            <person name="Hall J."/>
            <person name="Hebling U."/>
            <person name="Heumann K."/>
            <person name="Hilbert H."/>
            <person name="Hillier L.W."/>
            <person name="Hunicke-Smith S."/>
            <person name="Hyman R.W."/>
            <person name="Johnston M."/>
            <person name="Kalman S."/>
            <person name="Kleine K."/>
            <person name="Komp C."/>
            <person name="Kurdi O."/>
            <person name="Lashkari D."/>
            <person name="Lew H."/>
            <person name="Lin A."/>
            <person name="Lin D."/>
            <person name="Louis E.J."/>
            <person name="Marathe R."/>
            <person name="Messenguy F."/>
            <person name="Mewes H.-W."/>
            <person name="Mirtipati S."/>
            <person name="Moestl D."/>
            <person name="Mueller-Auer S."/>
            <person name="Namath A."/>
            <person name="Nentwich U."/>
            <person name="Oefner P."/>
            <person name="Pearson D."/>
            <person name="Petel F.X."/>
            <person name="Pohl T.M."/>
            <person name="Purnelle B."/>
            <person name="Rajandream M.A."/>
            <person name="Rechmann S."/>
            <person name="Rieger M."/>
            <person name="Riles L."/>
            <person name="Roberts D."/>
            <person name="Schaefer M."/>
            <person name="Scharfe M."/>
            <person name="Scherens B."/>
            <person name="Schramm S."/>
            <person name="Schroeder M."/>
            <person name="Sdicu A.-M."/>
            <person name="Tettelin H."/>
            <person name="Urrestarazu L.A."/>
            <person name="Ushinsky S."/>
            <person name="Vierendeels F."/>
            <person name="Vissers S."/>
            <person name="Voss H."/>
            <person name="Walsh S.V."/>
            <person name="Wambutt R."/>
            <person name="Wang Y."/>
            <person name="Wedler E."/>
            <person name="Wedler H."/>
            <person name="Winnett E."/>
            <person name="Zhong W.-W."/>
            <person name="Zollner A."/>
            <person name="Vo D.H."/>
            <person name="Hani J."/>
        </authorList>
    </citation>
    <scope>NUCLEOTIDE SEQUENCE [LARGE SCALE GENOMIC DNA]</scope>
    <source>
        <strain>ATCC 204508 / S288c</strain>
    </source>
</reference>
<reference key="3">
    <citation type="journal article" date="2014" name="G3 (Bethesda)">
        <title>The reference genome sequence of Saccharomyces cerevisiae: Then and now.</title>
        <authorList>
            <person name="Engel S.R."/>
            <person name="Dietrich F.S."/>
            <person name="Fisk D.G."/>
            <person name="Binkley G."/>
            <person name="Balakrishnan R."/>
            <person name="Costanzo M.C."/>
            <person name="Dwight S.S."/>
            <person name="Hitz B.C."/>
            <person name="Karra K."/>
            <person name="Nash R.S."/>
            <person name="Weng S."/>
            <person name="Wong E.D."/>
            <person name="Lloyd P."/>
            <person name="Skrzypek M.S."/>
            <person name="Miyasato S.R."/>
            <person name="Simison M."/>
            <person name="Cherry J.M."/>
        </authorList>
    </citation>
    <scope>GENOME REANNOTATION</scope>
    <source>
        <strain>ATCC 204508 / S288c</strain>
    </source>
</reference>
<reference key="4">
    <citation type="journal article" date="2004" name="Proc. Natl. Acad. Sci. U.S.A.">
        <title>Chemogenomic profiling: identifying the functional interactions of small molecules in yeast.</title>
        <authorList>
            <person name="Giaever G."/>
            <person name="Flaherty P."/>
            <person name="Kumm J."/>
            <person name="Proctor M."/>
            <person name="Nislow C."/>
            <person name="Jaramillo D.F."/>
            <person name="Chu A.M."/>
            <person name="Jordan M.I."/>
            <person name="Arkin A.P."/>
            <person name="Davis R.W."/>
        </authorList>
    </citation>
    <scope>FUNCTION</scope>
</reference>
<keyword id="KW-0489">Methyltransferase</keyword>
<keyword id="KW-1185">Reference proteome</keyword>
<keyword id="KW-0949">S-adenosyl-L-methionine</keyword>
<keyword id="KW-0808">Transferase</keyword>
<name>SET6_YEAST</name>
<protein>
    <recommendedName>
        <fullName>Potential protein lysine methyltransferase SET6</fullName>
        <ecNumber>2.1.1.-</ecNumber>
    </recommendedName>
    <alternativeName>
        <fullName>SET domain-containing protein 6</fullName>
    </alternativeName>
</protein>
<organism>
    <name type="scientific">Saccharomyces cerevisiae (strain ATCC 204508 / S288c)</name>
    <name type="common">Baker's yeast</name>
    <dbReference type="NCBI Taxonomy" id="559292"/>
    <lineage>
        <taxon>Eukaryota</taxon>
        <taxon>Fungi</taxon>
        <taxon>Dikarya</taxon>
        <taxon>Ascomycota</taxon>
        <taxon>Saccharomycotina</taxon>
        <taxon>Saccharomycetes</taxon>
        <taxon>Saccharomycetales</taxon>
        <taxon>Saccharomycetaceae</taxon>
        <taxon>Saccharomyces</taxon>
    </lineage>
</organism>
<accession>Q12529</accession>
<accession>D6W3K3</accession>
<comment type="function">
    <text evidence="2">Involved in resistance to compounds that target ergosterol biosynthesis, including fenpropimorph, dyclonine, and alverine citrate. Since a deletion in the absence of these compounds does not have an effect on growth, is more likely to be involved in compound availability.</text>
</comment>
<comment type="similarity">
    <text evidence="1">Belongs to the class V-like SAM-binding methyltransferase superfamily.</text>
</comment>